<evidence type="ECO:0000250" key="1"/>
<evidence type="ECO:0000255" key="2"/>
<evidence type="ECO:0000255" key="3">
    <source>
        <dbReference type="PROSITE-ProRule" id="PRU00289"/>
    </source>
</evidence>
<evidence type="ECO:0000256" key="4">
    <source>
        <dbReference type="SAM" id="MobiDB-lite"/>
    </source>
</evidence>
<evidence type="ECO:0000305" key="5"/>
<comment type="function">
    <text evidence="1">Essential cell division protein that coordinates cell division and chromosome segregation. The N-terminus is involved in assembly of the cell-division machinery. The C-terminus functions as a DNA motor that moves dsDNA in an ATP-dependent manner towards the difSL recombination site, which is located within the replication terminus region. Required for activation of the XerS recombinase, allowing activation of chromosome unlinking by recombination (By similarity).</text>
</comment>
<comment type="subunit">
    <text evidence="1">Homohexamer. Forms a ring that surrounds DNA (By similarity).</text>
</comment>
<comment type="subcellular location">
    <subcellularLocation>
        <location evidence="1">Cell membrane</location>
        <topology evidence="1">Multi-pass membrane protein</topology>
    </subcellularLocation>
    <text evidence="1">Located at the septum.</text>
</comment>
<comment type="domain">
    <text evidence="1">Consists of an N-terminal domain, which is sufficient for the localization to the septal ring and is required for cell division, followed by a linker domain, and a C-terminal domain, which forms the translocation motor involved in chromosome segregation. The C-terminal domain can be further subdivided into alpha, beta and gamma subdomains. The alpha and beta subdomains form the DNA pump, and the gamma subdomain is a regulatory subdomain (By similarity).</text>
</comment>
<comment type="similarity">
    <text evidence="5">Belongs to the FtsK/SpoIIIE/SftA family.</text>
</comment>
<proteinExistence type="inferred from homology"/>
<protein>
    <recommendedName>
        <fullName>DNA translocase FtsK</fullName>
    </recommendedName>
</protein>
<reference key="1">
    <citation type="journal article" date="2002" name="Proc. Natl. Acad. Sci. U.S.A.">
        <title>Genome sequence and comparative microarray analysis of serotype M18 group A Streptococcus strains associated with acute rheumatic fever outbreaks.</title>
        <authorList>
            <person name="Smoot J.C."/>
            <person name="Barbian K.D."/>
            <person name="Van Gompel J.J."/>
            <person name="Smoot L.M."/>
            <person name="Chaussee M.S."/>
            <person name="Sylva G.L."/>
            <person name="Sturdevant D.E."/>
            <person name="Ricklefs S.M."/>
            <person name="Porcella S.F."/>
            <person name="Parkins L.D."/>
            <person name="Beres S.B."/>
            <person name="Campbell D.S."/>
            <person name="Smith T.M."/>
            <person name="Zhang Q."/>
            <person name="Kapur V."/>
            <person name="Daly J.A."/>
            <person name="Veasy L.G."/>
            <person name="Musser J.M."/>
        </authorList>
    </citation>
    <scope>NUCLEOTIDE SEQUENCE [LARGE SCALE GENOMIC DNA]</scope>
    <source>
        <strain>MGAS8232</strain>
    </source>
</reference>
<accession>Q8P276</accession>
<organism>
    <name type="scientific">Streptococcus pyogenes serotype M18 (strain MGAS8232)</name>
    <dbReference type="NCBI Taxonomy" id="186103"/>
    <lineage>
        <taxon>Bacteria</taxon>
        <taxon>Bacillati</taxon>
        <taxon>Bacillota</taxon>
        <taxon>Bacilli</taxon>
        <taxon>Lactobacillales</taxon>
        <taxon>Streptococcaceae</taxon>
        <taxon>Streptococcus</taxon>
    </lineage>
</organism>
<keyword id="KW-0067">ATP-binding</keyword>
<keyword id="KW-0131">Cell cycle</keyword>
<keyword id="KW-0132">Cell division</keyword>
<keyword id="KW-1003">Cell membrane</keyword>
<keyword id="KW-0159">Chromosome partition</keyword>
<keyword id="KW-0238">DNA-binding</keyword>
<keyword id="KW-0472">Membrane</keyword>
<keyword id="KW-0547">Nucleotide-binding</keyword>
<keyword id="KW-0812">Transmembrane</keyword>
<keyword id="KW-1133">Transmembrane helix</keyword>
<dbReference type="EMBL" id="AE009949">
    <property type="protein sequence ID" value="AAL97219.1"/>
    <property type="molecule type" value="Genomic_DNA"/>
</dbReference>
<dbReference type="RefSeq" id="WP_011017450.1">
    <property type="nucleotide sequence ID" value="NC_003485.1"/>
</dbReference>
<dbReference type="SMR" id="Q8P276"/>
<dbReference type="KEGG" id="spm:spyM18_0500"/>
<dbReference type="HOGENOM" id="CLU_001981_9_6_9"/>
<dbReference type="GO" id="GO:0005886">
    <property type="term" value="C:plasma membrane"/>
    <property type="evidence" value="ECO:0007669"/>
    <property type="project" value="UniProtKB-SubCell"/>
</dbReference>
<dbReference type="GO" id="GO:0005524">
    <property type="term" value="F:ATP binding"/>
    <property type="evidence" value="ECO:0007669"/>
    <property type="project" value="UniProtKB-KW"/>
</dbReference>
<dbReference type="GO" id="GO:0016887">
    <property type="term" value="F:ATP hydrolysis activity"/>
    <property type="evidence" value="ECO:0007669"/>
    <property type="project" value="InterPro"/>
</dbReference>
<dbReference type="GO" id="GO:0003677">
    <property type="term" value="F:DNA binding"/>
    <property type="evidence" value="ECO:0007669"/>
    <property type="project" value="UniProtKB-KW"/>
</dbReference>
<dbReference type="GO" id="GO:0051301">
    <property type="term" value="P:cell division"/>
    <property type="evidence" value="ECO:0007669"/>
    <property type="project" value="UniProtKB-KW"/>
</dbReference>
<dbReference type="GO" id="GO:0007059">
    <property type="term" value="P:chromosome segregation"/>
    <property type="evidence" value="ECO:0007669"/>
    <property type="project" value="UniProtKB-KW"/>
</dbReference>
<dbReference type="CDD" id="cd01127">
    <property type="entry name" value="TrwB_TraG_TraD_VirD4"/>
    <property type="match status" value="1"/>
</dbReference>
<dbReference type="Gene3D" id="3.30.980.40">
    <property type="match status" value="1"/>
</dbReference>
<dbReference type="Gene3D" id="3.40.50.300">
    <property type="entry name" value="P-loop containing nucleotide triphosphate hydrolases"/>
    <property type="match status" value="1"/>
</dbReference>
<dbReference type="Gene3D" id="1.10.10.10">
    <property type="entry name" value="Winged helix-like DNA-binding domain superfamily/Winged helix DNA-binding domain"/>
    <property type="match status" value="1"/>
</dbReference>
<dbReference type="InterPro" id="IPR003593">
    <property type="entry name" value="AAA+_ATPase"/>
</dbReference>
<dbReference type="InterPro" id="IPR050206">
    <property type="entry name" value="FtsK/SpoIIIE/SftA"/>
</dbReference>
<dbReference type="InterPro" id="IPR041027">
    <property type="entry name" value="FtsK_alpha"/>
</dbReference>
<dbReference type="InterPro" id="IPR002543">
    <property type="entry name" value="FtsK_dom"/>
</dbReference>
<dbReference type="InterPro" id="IPR018541">
    <property type="entry name" value="Ftsk_gamma"/>
</dbReference>
<dbReference type="InterPro" id="IPR027417">
    <property type="entry name" value="P-loop_NTPase"/>
</dbReference>
<dbReference type="InterPro" id="IPR036388">
    <property type="entry name" value="WH-like_DNA-bd_sf"/>
</dbReference>
<dbReference type="InterPro" id="IPR036390">
    <property type="entry name" value="WH_DNA-bd_sf"/>
</dbReference>
<dbReference type="PANTHER" id="PTHR22683:SF41">
    <property type="entry name" value="DNA TRANSLOCASE FTSK"/>
    <property type="match status" value="1"/>
</dbReference>
<dbReference type="PANTHER" id="PTHR22683">
    <property type="entry name" value="SPORULATION PROTEIN RELATED"/>
    <property type="match status" value="1"/>
</dbReference>
<dbReference type="Pfam" id="PF17854">
    <property type="entry name" value="FtsK_alpha"/>
    <property type="match status" value="1"/>
</dbReference>
<dbReference type="Pfam" id="PF09397">
    <property type="entry name" value="FtsK_gamma"/>
    <property type="match status" value="1"/>
</dbReference>
<dbReference type="Pfam" id="PF01580">
    <property type="entry name" value="FtsK_SpoIIIE"/>
    <property type="match status" value="1"/>
</dbReference>
<dbReference type="SMART" id="SM00382">
    <property type="entry name" value="AAA"/>
    <property type="match status" value="1"/>
</dbReference>
<dbReference type="SMART" id="SM00843">
    <property type="entry name" value="Ftsk_gamma"/>
    <property type="match status" value="1"/>
</dbReference>
<dbReference type="SUPFAM" id="SSF52540">
    <property type="entry name" value="P-loop containing nucleoside triphosphate hydrolases"/>
    <property type="match status" value="1"/>
</dbReference>
<dbReference type="SUPFAM" id="SSF46785">
    <property type="entry name" value="Winged helix' DNA-binding domain"/>
    <property type="match status" value="1"/>
</dbReference>
<dbReference type="PROSITE" id="PS50901">
    <property type="entry name" value="FTSK"/>
    <property type="match status" value="1"/>
</dbReference>
<feature type="chain" id="PRO_0000098311" description="DNA translocase FtsK">
    <location>
        <begin position="1"/>
        <end position="801"/>
    </location>
</feature>
<feature type="transmembrane region" description="Helical" evidence="2">
    <location>
        <begin position="31"/>
        <end position="53"/>
    </location>
</feature>
<feature type="transmembrane region" description="Helical" evidence="2">
    <location>
        <begin position="58"/>
        <end position="80"/>
    </location>
</feature>
<feature type="transmembrane region" description="Helical" evidence="2">
    <location>
        <begin position="89"/>
        <end position="111"/>
    </location>
</feature>
<feature type="transmembrane region" description="Helical" evidence="2">
    <location>
        <begin position="131"/>
        <end position="150"/>
    </location>
</feature>
<feature type="transmembrane region" description="Helical" evidence="2">
    <location>
        <begin position="155"/>
        <end position="177"/>
    </location>
</feature>
<feature type="topological domain" description="Cytoplasmic" evidence="2">
    <location>
        <begin position="178"/>
        <end position="801"/>
    </location>
</feature>
<feature type="domain" description="FtsK" evidence="3">
    <location>
        <begin position="464"/>
        <end position="660"/>
    </location>
</feature>
<feature type="region of interest" description="Disordered" evidence="4">
    <location>
        <begin position="720"/>
        <end position="739"/>
    </location>
</feature>
<feature type="binding site" evidence="3">
    <location>
        <begin position="484"/>
        <end position="489"/>
    </location>
    <ligand>
        <name>ATP</name>
        <dbReference type="ChEBI" id="CHEBI:30616"/>
    </ligand>
</feature>
<sequence>MVKRNQRKKSAPKKRLTKAEVEKQRAIKRMILSVLMALLLIFAMLRLGVFGVTTYNMIRFLVGSLAYPFMFAWLIYLFCFKWLRQKDGMIAGVVIAFLGLLVEWHAFLFAMPRMLDQDIFLGTARLITRDLLALRVTEFVGGGMLGALLYKPIAFLFSNIGSYFIGFLFILLGLFLMTPWDIYDVSHFVKEAVDKLAVAYQENKEKRFIKREEHRLQTEKEALEKQAQEEEKRLAELTVDPETGEIVEDSQSQVSYDLAEDMTKEPEILAYDSHLKDDEASLFDQEDLAYAHEKIGAYDSLSALASSEDEMDMDEPVEVDFTPKTHLLYKLPTIDLFAPDKPKNQSKEKNLVRKNIKVLEDTFQSFGIDVKVERAEIGPSVTKYEIKPAVGVRVNRISNLADDLALALAAKDVRIEAPIPGKSLIGIEVPNSEIATVSFRELWEQSDANPENLLEVPLGKAVNGNARSFNLARMPHLLVAGSTGSGKSVAVNGIISSILMKARPDQVKFMMIDPKMVELSVYNDIPHLLIPVVTNPRKASKALQKVVDEMENRYELFSKIGVRNIAGYNTKVEEFNASSEQKQIPLPLIVVIVDELADLMMVASKEVEDAIIRLGQKARAAGIHMILATQRPSVDVISGLIKANVPSRMAFAVSSGTDSRTILDENGAEKLLGRGDMLFKPIDENHPVRLQGSFISDDDVERIVNFIKDQAEADYDDAFDPGEVSDNDPGFSGNGGAAEGDPLFEEAKALVLETQKASASMIQRRLSVGFNRATRLMDELEEAGVIGPAEGTKPRKVLQTN</sequence>
<gene>
    <name type="primary">ftsK</name>
    <name type="ordered locus">spyM18_0500</name>
</gene>
<name>FTSK_STRP8</name>